<name>RL16_ACAM1</name>
<proteinExistence type="inferred from homology"/>
<dbReference type="EMBL" id="CP000828">
    <property type="protein sequence ID" value="ABW29675.1"/>
    <property type="molecule type" value="Genomic_DNA"/>
</dbReference>
<dbReference type="RefSeq" id="WP_010469314.1">
    <property type="nucleotide sequence ID" value="NC_009925.1"/>
</dbReference>
<dbReference type="SMR" id="B0C1E0"/>
<dbReference type="STRING" id="329726.AM1_4703"/>
<dbReference type="KEGG" id="amr:AM1_4703"/>
<dbReference type="eggNOG" id="COG0197">
    <property type="taxonomic scope" value="Bacteria"/>
</dbReference>
<dbReference type="HOGENOM" id="CLU_078858_2_1_3"/>
<dbReference type="OrthoDB" id="9802589at2"/>
<dbReference type="Proteomes" id="UP000000268">
    <property type="component" value="Chromosome"/>
</dbReference>
<dbReference type="GO" id="GO:1990904">
    <property type="term" value="C:ribonucleoprotein complex"/>
    <property type="evidence" value="ECO:0007669"/>
    <property type="project" value="UniProtKB-KW"/>
</dbReference>
<dbReference type="GO" id="GO:0005840">
    <property type="term" value="C:ribosome"/>
    <property type="evidence" value="ECO:0007669"/>
    <property type="project" value="UniProtKB-KW"/>
</dbReference>
<dbReference type="GO" id="GO:0019843">
    <property type="term" value="F:rRNA binding"/>
    <property type="evidence" value="ECO:0007669"/>
    <property type="project" value="UniProtKB-UniRule"/>
</dbReference>
<dbReference type="GO" id="GO:0003735">
    <property type="term" value="F:structural constituent of ribosome"/>
    <property type="evidence" value="ECO:0007669"/>
    <property type="project" value="InterPro"/>
</dbReference>
<dbReference type="GO" id="GO:0000049">
    <property type="term" value="F:tRNA binding"/>
    <property type="evidence" value="ECO:0007669"/>
    <property type="project" value="UniProtKB-KW"/>
</dbReference>
<dbReference type="GO" id="GO:0006412">
    <property type="term" value="P:translation"/>
    <property type="evidence" value="ECO:0007669"/>
    <property type="project" value="UniProtKB-UniRule"/>
</dbReference>
<dbReference type="CDD" id="cd01433">
    <property type="entry name" value="Ribosomal_L16_L10e"/>
    <property type="match status" value="1"/>
</dbReference>
<dbReference type="FunFam" id="3.90.1170.10:FF:000001">
    <property type="entry name" value="50S ribosomal protein L16"/>
    <property type="match status" value="1"/>
</dbReference>
<dbReference type="Gene3D" id="3.90.1170.10">
    <property type="entry name" value="Ribosomal protein L10e/L16"/>
    <property type="match status" value="1"/>
</dbReference>
<dbReference type="HAMAP" id="MF_01342">
    <property type="entry name" value="Ribosomal_uL16"/>
    <property type="match status" value="1"/>
</dbReference>
<dbReference type="InterPro" id="IPR047873">
    <property type="entry name" value="Ribosomal_uL16"/>
</dbReference>
<dbReference type="InterPro" id="IPR000114">
    <property type="entry name" value="Ribosomal_uL16_bact-type"/>
</dbReference>
<dbReference type="InterPro" id="IPR020798">
    <property type="entry name" value="Ribosomal_uL16_CS"/>
</dbReference>
<dbReference type="InterPro" id="IPR016180">
    <property type="entry name" value="Ribosomal_uL16_dom"/>
</dbReference>
<dbReference type="InterPro" id="IPR036920">
    <property type="entry name" value="Ribosomal_uL16_sf"/>
</dbReference>
<dbReference type="NCBIfam" id="TIGR01164">
    <property type="entry name" value="rplP_bact"/>
    <property type="match status" value="1"/>
</dbReference>
<dbReference type="PANTHER" id="PTHR12220">
    <property type="entry name" value="50S/60S RIBOSOMAL PROTEIN L16"/>
    <property type="match status" value="1"/>
</dbReference>
<dbReference type="PANTHER" id="PTHR12220:SF13">
    <property type="entry name" value="LARGE RIBOSOMAL SUBUNIT PROTEIN UL16M"/>
    <property type="match status" value="1"/>
</dbReference>
<dbReference type="Pfam" id="PF00252">
    <property type="entry name" value="Ribosomal_L16"/>
    <property type="match status" value="1"/>
</dbReference>
<dbReference type="PRINTS" id="PR00060">
    <property type="entry name" value="RIBOSOMALL16"/>
</dbReference>
<dbReference type="SUPFAM" id="SSF54686">
    <property type="entry name" value="Ribosomal protein L16p/L10e"/>
    <property type="match status" value="1"/>
</dbReference>
<dbReference type="PROSITE" id="PS00586">
    <property type="entry name" value="RIBOSOMAL_L16_1"/>
    <property type="match status" value="1"/>
</dbReference>
<dbReference type="PROSITE" id="PS00701">
    <property type="entry name" value="RIBOSOMAL_L16_2"/>
    <property type="match status" value="1"/>
</dbReference>
<organism>
    <name type="scientific">Acaryochloris marina (strain MBIC 11017)</name>
    <dbReference type="NCBI Taxonomy" id="329726"/>
    <lineage>
        <taxon>Bacteria</taxon>
        <taxon>Bacillati</taxon>
        <taxon>Cyanobacteriota</taxon>
        <taxon>Cyanophyceae</taxon>
        <taxon>Acaryochloridales</taxon>
        <taxon>Acaryochloridaceae</taxon>
        <taxon>Acaryochloris</taxon>
    </lineage>
</organism>
<gene>
    <name evidence="1" type="primary">rplP</name>
    <name evidence="1" type="synonym">rpl16</name>
    <name type="ordered locus">AM1_4703</name>
</gene>
<comment type="function">
    <text evidence="1">Binds 23S rRNA and is also seen to make contacts with the A and possibly P site tRNAs.</text>
</comment>
<comment type="subunit">
    <text evidence="1">Part of the 50S ribosomal subunit.</text>
</comment>
<comment type="similarity">
    <text evidence="1">Belongs to the universal ribosomal protein uL16 family.</text>
</comment>
<protein>
    <recommendedName>
        <fullName evidence="1">Large ribosomal subunit protein uL16</fullName>
    </recommendedName>
    <alternativeName>
        <fullName evidence="3">50S ribosomal protein L16</fullName>
    </alternativeName>
</protein>
<reference key="1">
    <citation type="journal article" date="2008" name="Proc. Natl. Acad. Sci. U.S.A.">
        <title>Niche adaptation and genome expansion in the chlorophyll d-producing cyanobacterium Acaryochloris marina.</title>
        <authorList>
            <person name="Swingley W.D."/>
            <person name="Chen M."/>
            <person name="Cheung P.C."/>
            <person name="Conrad A.L."/>
            <person name="Dejesa L.C."/>
            <person name="Hao J."/>
            <person name="Honchak B.M."/>
            <person name="Karbach L.E."/>
            <person name="Kurdoglu A."/>
            <person name="Lahiri S."/>
            <person name="Mastrian S.D."/>
            <person name="Miyashita H."/>
            <person name="Page L."/>
            <person name="Ramakrishna P."/>
            <person name="Satoh S."/>
            <person name="Sattley W.M."/>
            <person name="Shimada Y."/>
            <person name="Taylor H.L."/>
            <person name="Tomo T."/>
            <person name="Tsuchiya T."/>
            <person name="Wang Z.T."/>
            <person name="Raymond J."/>
            <person name="Mimuro M."/>
            <person name="Blankenship R.E."/>
            <person name="Touchman J.W."/>
        </authorList>
    </citation>
    <scope>NUCLEOTIDE SEQUENCE [LARGE SCALE GENOMIC DNA]</scope>
    <source>
        <strain>MBIC 11017</strain>
    </source>
</reference>
<accession>B0C1E0</accession>
<keyword id="KW-1185">Reference proteome</keyword>
<keyword id="KW-0687">Ribonucleoprotein</keyword>
<keyword id="KW-0689">Ribosomal protein</keyword>
<keyword id="KW-0694">RNA-binding</keyword>
<keyword id="KW-0699">rRNA-binding</keyword>
<keyword id="KW-0820">tRNA-binding</keyword>
<evidence type="ECO:0000255" key="1">
    <source>
        <dbReference type="HAMAP-Rule" id="MF_01342"/>
    </source>
</evidence>
<evidence type="ECO:0000256" key="2">
    <source>
        <dbReference type="SAM" id="MobiDB-lite"/>
    </source>
</evidence>
<evidence type="ECO:0000305" key="3"/>
<feature type="chain" id="PRO_1000086739" description="Large ribosomal subunit protein uL16">
    <location>
        <begin position="1"/>
        <end position="139"/>
    </location>
</feature>
<feature type="region of interest" description="Disordered" evidence="2">
    <location>
        <begin position="1"/>
        <end position="23"/>
    </location>
</feature>
<feature type="compositionally biased region" description="Basic residues" evidence="2">
    <location>
        <begin position="1"/>
        <end position="21"/>
    </location>
</feature>
<sequence length="139" mass="15931">MLSPRKTKFRKQHRGRMRGKATRGNTLSFGDYGLQALEPSWITSRQIEAGRRAMTRYVRRGGKIWIRIFPDKPVTMRPAETRMGSGKGAPEYWVAVVKPGRIMYEMNGVPESTAREAMRLAAFKMPIKTKFVARPKEES</sequence>